<organism>
    <name type="scientific">Lactobacillus gasseri (strain ATCC 33323 / DSM 20243 / BCRC 14619 / CIP 102991 / JCM 1131 / KCTC 3163 / NCIMB 11718 / NCTC 13722 / AM63)</name>
    <dbReference type="NCBI Taxonomy" id="324831"/>
    <lineage>
        <taxon>Bacteria</taxon>
        <taxon>Bacillati</taxon>
        <taxon>Bacillota</taxon>
        <taxon>Bacilli</taxon>
        <taxon>Lactobacillales</taxon>
        <taxon>Lactobacillaceae</taxon>
        <taxon>Lactobacillus</taxon>
    </lineage>
</organism>
<dbReference type="EC" id="6.1.1.21" evidence="1"/>
<dbReference type="EMBL" id="CP000413">
    <property type="protein sequence ID" value="ABJ60248.1"/>
    <property type="molecule type" value="Genomic_DNA"/>
</dbReference>
<dbReference type="RefSeq" id="WP_003647438.1">
    <property type="nucleotide sequence ID" value="NZ_WBMG01000010.1"/>
</dbReference>
<dbReference type="SMR" id="Q043X4"/>
<dbReference type="GeneID" id="29639801"/>
<dbReference type="KEGG" id="lga:LGAS_0859"/>
<dbReference type="HOGENOM" id="CLU_025113_1_1_9"/>
<dbReference type="BioCyc" id="LGAS324831:G1G6Y-852-MONOMER"/>
<dbReference type="Proteomes" id="UP000000664">
    <property type="component" value="Chromosome"/>
</dbReference>
<dbReference type="GO" id="GO:0005737">
    <property type="term" value="C:cytoplasm"/>
    <property type="evidence" value="ECO:0007669"/>
    <property type="project" value="UniProtKB-SubCell"/>
</dbReference>
<dbReference type="GO" id="GO:0005524">
    <property type="term" value="F:ATP binding"/>
    <property type="evidence" value="ECO:0007669"/>
    <property type="project" value="UniProtKB-UniRule"/>
</dbReference>
<dbReference type="GO" id="GO:0140096">
    <property type="term" value="F:catalytic activity, acting on a protein"/>
    <property type="evidence" value="ECO:0007669"/>
    <property type="project" value="UniProtKB-ARBA"/>
</dbReference>
<dbReference type="GO" id="GO:0004821">
    <property type="term" value="F:histidine-tRNA ligase activity"/>
    <property type="evidence" value="ECO:0007669"/>
    <property type="project" value="UniProtKB-UniRule"/>
</dbReference>
<dbReference type="GO" id="GO:0016740">
    <property type="term" value="F:transferase activity"/>
    <property type="evidence" value="ECO:0007669"/>
    <property type="project" value="UniProtKB-ARBA"/>
</dbReference>
<dbReference type="GO" id="GO:0006427">
    <property type="term" value="P:histidyl-tRNA aminoacylation"/>
    <property type="evidence" value="ECO:0007669"/>
    <property type="project" value="UniProtKB-UniRule"/>
</dbReference>
<dbReference type="CDD" id="cd00773">
    <property type="entry name" value="HisRS-like_core"/>
    <property type="match status" value="1"/>
</dbReference>
<dbReference type="CDD" id="cd00859">
    <property type="entry name" value="HisRS_anticodon"/>
    <property type="match status" value="1"/>
</dbReference>
<dbReference type="Gene3D" id="3.40.50.800">
    <property type="entry name" value="Anticodon-binding domain"/>
    <property type="match status" value="1"/>
</dbReference>
<dbReference type="Gene3D" id="3.30.930.10">
    <property type="entry name" value="Bira Bifunctional Protein, Domain 2"/>
    <property type="match status" value="1"/>
</dbReference>
<dbReference type="HAMAP" id="MF_00127">
    <property type="entry name" value="His_tRNA_synth"/>
    <property type="match status" value="1"/>
</dbReference>
<dbReference type="InterPro" id="IPR006195">
    <property type="entry name" value="aa-tRNA-synth_II"/>
</dbReference>
<dbReference type="InterPro" id="IPR045864">
    <property type="entry name" value="aa-tRNA-synth_II/BPL/LPL"/>
</dbReference>
<dbReference type="InterPro" id="IPR004154">
    <property type="entry name" value="Anticodon-bd"/>
</dbReference>
<dbReference type="InterPro" id="IPR036621">
    <property type="entry name" value="Anticodon-bd_dom_sf"/>
</dbReference>
<dbReference type="InterPro" id="IPR015807">
    <property type="entry name" value="His-tRNA-ligase"/>
</dbReference>
<dbReference type="InterPro" id="IPR041715">
    <property type="entry name" value="HisRS-like_core"/>
</dbReference>
<dbReference type="InterPro" id="IPR004516">
    <property type="entry name" value="HisRS/HisZ"/>
</dbReference>
<dbReference type="InterPro" id="IPR033656">
    <property type="entry name" value="HisRS_anticodon"/>
</dbReference>
<dbReference type="NCBIfam" id="TIGR00442">
    <property type="entry name" value="hisS"/>
    <property type="match status" value="1"/>
</dbReference>
<dbReference type="PANTHER" id="PTHR43707:SF1">
    <property type="entry name" value="HISTIDINE--TRNA LIGASE, MITOCHONDRIAL-RELATED"/>
    <property type="match status" value="1"/>
</dbReference>
<dbReference type="PANTHER" id="PTHR43707">
    <property type="entry name" value="HISTIDYL-TRNA SYNTHETASE"/>
    <property type="match status" value="1"/>
</dbReference>
<dbReference type="Pfam" id="PF03129">
    <property type="entry name" value="HGTP_anticodon"/>
    <property type="match status" value="1"/>
</dbReference>
<dbReference type="Pfam" id="PF13393">
    <property type="entry name" value="tRNA-synt_His"/>
    <property type="match status" value="1"/>
</dbReference>
<dbReference type="PIRSF" id="PIRSF001549">
    <property type="entry name" value="His-tRNA_synth"/>
    <property type="match status" value="1"/>
</dbReference>
<dbReference type="SUPFAM" id="SSF52954">
    <property type="entry name" value="Class II aaRS ABD-related"/>
    <property type="match status" value="1"/>
</dbReference>
<dbReference type="SUPFAM" id="SSF55681">
    <property type="entry name" value="Class II aaRS and biotin synthetases"/>
    <property type="match status" value="1"/>
</dbReference>
<dbReference type="PROSITE" id="PS50862">
    <property type="entry name" value="AA_TRNA_LIGASE_II"/>
    <property type="match status" value="1"/>
</dbReference>
<evidence type="ECO:0000255" key="1">
    <source>
        <dbReference type="HAMAP-Rule" id="MF_00127"/>
    </source>
</evidence>
<comment type="catalytic activity">
    <reaction evidence="1">
        <text>tRNA(His) + L-histidine + ATP = L-histidyl-tRNA(His) + AMP + diphosphate + H(+)</text>
        <dbReference type="Rhea" id="RHEA:17313"/>
        <dbReference type="Rhea" id="RHEA-COMP:9665"/>
        <dbReference type="Rhea" id="RHEA-COMP:9689"/>
        <dbReference type="ChEBI" id="CHEBI:15378"/>
        <dbReference type="ChEBI" id="CHEBI:30616"/>
        <dbReference type="ChEBI" id="CHEBI:33019"/>
        <dbReference type="ChEBI" id="CHEBI:57595"/>
        <dbReference type="ChEBI" id="CHEBI:78442"/>
        <dbReference type="ChEBI" id="CHEBI:78527"/>
        <dbReference type="ChEBI" id="CHEBI:456215"/>
        <dbReference type="EC" id="6.1.1.21"/>
    </reaction>
</comment>
<comment type="subunit">
    <text evidence="1">Homodimer.</text>
</comment>
<comment type="subcellular location">
    <subcellularLocation>
        <location evidence="1">Cytoplasm</location>
    </subcellularLocation>
</comment>
<comment type="similarity">
    <text evidence="1">Belongs to the class-II aminoacyl-tRNA synthetase family.</text>
</comment>
<gene>
    <name evidence="1" type="primary">hisS</name>
    <name type="ordered locus">LGAS_0859</name>
</gene>
<feature type="chain" id="PRO_1000016379" description="Histidine--tRNA ligase">
    <location>
        <begin position="1"/>
        <end position="428"/>
    </location>
</feature>
<reference key="1">
    <citation type="journal article" date="2006" name="Proc. Natl. Acad. Sci. U.S.A.">
        <title>Comparative genomics of the lactic acid bacteria.</title>
        <authorList>
            <person name="Makarova K.S."/>
            <person name="Slesarev A."/>
            <person name="Wolf Y.I."/>
            <person name="Sorokin A."/>
            <person name="Mirkin B."/>
            <person name="Koonin E.V."/>
            <person name="Pavlov A."/>
            <person name="Pavlova N."/>
            <person name="Karamychev V."/>
            <person name="Polouchine N."/>
            <person name="Shakhova V."/>
            <person name="Grigoriev I."/>
            <person name="Lou Y."/>
            <person name="Rohksar D."/>
            <person name="Lucas S."/>
            <person name="Huang K."/>
            <person name="Goodstein D.M."/>
            <person name="Hawkins T."/>
            <person name="Plengvidhya V."/>
            <person name="Welker D."/>
            <person name="Hughes J."/>
            <person name="Goh Y."/>
            <person name="Benson A."/>
            <person name="Baldwin K."/>
            <person name="Lee J.-H."/>
            <person name="Diaz-Muniz I."/>
            <person name="Dosti B."/>
            <person name="Smeianov V."/>
            <person name="Wechter W."/>
            <person name="Barabote R."/>
            <person name="Lorca G."/>
            <person name="Altermann E."/>
            <person name="Barrangou R."/>
            <person name="Ganesan B."/>
            <person name="Xie Y."/>
            <person name="Rawsthorne H."/>
            <person name="Tamir D."/>
            <person name="Parker C."/>
            <person name="Breidt F."/>
            <person name="Broadbent J.R."/>
            <person name="Hutkins R."/>
            <person name="O'Sullivan D."/>
            <person name="Steele J."/>
            <person name="Unlu G."/>
            <person name="Saier M.H. Jr."/>
            <person name="Klaenhammer T."/>
            <person name="Richardson P."/>
            <person name="Kozyavkin S."/>
            <person name="Weimer B.C."/>
            <person name="Mills D.A."/>
        </authorList>
    </citation>
    <scope>NUCLEOTIDE SEQUENCE [LARGE SCALE GENOMIC DNA]</scope>
    <source>
        <strain>ATCC 33323 / DSM 20243 / BCRC 14619 / CIP 102991 / JCM 1131 / KCTC 3163 / NCIMB 11718 / NCTC 13722 / AM63</strain>
    </source>
</reference>
<name>SYH_LACGA</name>
<proteinExistence type="inferred from homology"/>
<accession>Q043X4</accession>
<sequence length="428" mass="49050">MKVQRPKGTVDILPAESGSWEKVETIARNFFKRANYREIRTPSFENYEVFSRSSGESSDVVEKEMYDFNDKGGRHIALRPEGTAGVVRAYVENKLYGPDVVKPFNVYYIDNTFRYERPQAGRQREFHQIGVESFGSNSPLADVETIMMGHDLLAELGVKNYELHINTLGNAQVRKDYHDALVNYFTPLKDQLSEDSQRRLSMNPLRILDSKAEEDKQFLPDAPRIVDYLDEDSKKNFETITDMLEQLGINYVLDDDLVRGLDYYTGVIFEFMVEDKNLWESATTILGGGRYNHLVEEFDGPETPAVGFGIGEERLMLVLKEQNPALFEDEGIDFFITNIGEGTEMKAVEIARSLRKQDFKAQYDVDQKKLKQQFRKADRVHAKFVITLGAKELENGVLNIKRLADGKTLDLSLEDLNDMKSVMEKIED</sequence>
<keyword id="KW-0030">Aminoacyl-tRNA synthetase</keyword>
<keyword id="KW-0067">ATP-binding</keyword>
<keyword id="KW-0963">Cytoplasm</keyword>
<keyword id="KW-0436">Ligase</keyword>
<keyword id="KW-0547">Nucleotide-binding</keyword>
<keyword id="KW-0648">Protein biosynthesis</keyword>
<protein>
    <recommendedName>
        <fullName evidence="1">Histidine--tRNA ligase</fullName>
        <ecNumber evidence="1">6.1.1.21</ecNumber>
    </recommendedName>
    <alternativeName>
        <fullName evidence="1">Histidyl-tRNA synthetase</fullName>
        <shortName evidence="1">HisRS</shortName>
    </alternativeName>
</protein>